<sequence>METLKSDNKKRVLPSWMTAPGNERKVVSVKTAKRKQTAAIRVGAATRAPAKETVYCMNEAEMVDVALGILIEGRKQEKPWEQPSLVAPDKLQLSPPCSESPHTSSPGSSSEEEDSRTDSPALGLSPARGPEASNSPCSRSPEEGKEEEDELKYVREIFFS</sequence>
<dbReference type="EMBL" id="BC079043">
    <property type="protein sequence ID" value="AAH79043.1"/>
    <property type="molecule type" value="mRNA"/>
</dbReference>
<dbReference type="RefSeq" id="NP_001019496.1">
    <property type="nucleotide sequence ID" value="NM_001024325.1"/>
</dbReference>
<dbReference type="FunCoup" id="Q6AYH4">
    <property type="interactions" value="1276"/>
</dbReference>
<dbReference type="STRING" id="10116.ENSRNOP00000034483"/>
<dbReference type="PhosphoSitePlus" id="Q6AYH4"/>
<dbReference type="PaxDb" id="10116-ENSRNOP00000034483"/>
<dbReference type="Ensembl" id="ENSRNOT00000029818.3">
    <property type="protein sequence ID" value="ENSRNOP00000034483.2"/>
    <property type="gene ID" value="ENSRNOG00000026958.3"/>
</dbReference>
<dbReference type="GeneID" id="500077"/>
<dbReference type="KEGG" id="rno:500077"/>
<dbReference type="UCSC" id="RGD:1563238">
    <property type="organism name" value="rat"/>
</dbReference>
<dbReference type="AGR" id="RGD:1563238"/>
<dbReference type="CTD" id="78996"/>
<dbReference type="RGD" id="1563238">
    <property type="gene designation" value="Cyren"/>
</dbReference>
<dbReference type="eggNOG" id="ENOG502SEX2">
    <property type="taxonomic scope" value="Eukaryota"/>
</dbReference>
<dbReference type="GeneTree" id="ENSGT00390000013192"/>
<dbReference type="HOGENOM" id="CLU_126072_0_0_1"/>
<dbReference type="InParanoid" id="Q6AYH4"/>
<dbReference type="OrthoDB" id="90304at9989"/>
<dbReference type="PhylomeDB" id="Q6AYH4"/>
<dbReference type="TreeFam" id="TF336925"/>
<dbReference type="PRO" id="PR:Q6AYH4"/>
<dbReference type="Proteomes" id="UP000002494">
    <property type="component" value="Chromosome 4"/>
</dbReference>
<dbReference type="Bgee" id="ENSRNOG00000026958">
    <property type="expression patterns" value="Expressed in testis and 19 other cell types or tissues"/>
</dbReference>
<dbReference type="GO" id="GO:0005737">
    <property type="term" value="C:cytoplasm"/>
    <property type="evidence" value="ECO:0000250"/>
    <property type="project" value="UniProtKB"/>
</dbReference>
<dbReference type="GO" id="GO:1990391">
    <property type="term" value="C:DNA repair complex"/>
    <property type="evidence" value="ECO:0000266"/>
    <property type="project" value="RGD"/>
</dbReference>
<dbReference type="GO" id="GO:0005634">
    <property type="term" value="C:nucleus"/>
    <property type="evidence" value="ECO:0000250"/>
    <property type="project" value="UniProtKB"/>
</dbReference>
<dbReference type="GO" id="GO:0035861">
    <property type="term" value="C:site of double-strand break"/>
    <property type="evidence" value="ECO:0000250"/>
    <property type="project" value="UniProtKB"/>
</dbReference>
<dbReference type="GO" id="GO:0003684">
    <property type="term" value="F:damaged DNA binding"/>
    <property type="evidence" value="ECO:0000266"/>
    <property type="project" value="RGD"/>
</dbReference>
<dbReference type="GO" id="GO:0060090">
    <property type="term" value="F:molecular adaptor activity"/>
    <property type="evidence" value="ECO:0000266"/>
    <property type="project" value="RGD"/>
</dbReference>
<dbReference type="GO" id="GO:0006974">
    <property type="term" value="P:DNA damage response"/>
    <property type="evidence" value="ECO:0000266"/>
    <property type="project" value="RGD"/>
</dbReference>
<dbReference type="GO" id="GO:0006303">
    <property type="term" value="P:double-strand break repair via nonhomologous end joining"/>
    <property type="evidence" value="ECO:0000250"/>
    <property type="project" value="UniProtKB"/>
</dbReference>
<dbReference type="GO" id="GO:0033152">
    <property type="term" value="P:immunoglobulin V(D)J recombination"/>
    <property type="evidence" value="ECO:0000250"/>
    <property type="project" value="UniProtKB"/>
</dbReference>
<dbReference type="GO" id="GO:2001033">
    <property type="term" value="P:negative regulation of double-strand break repair via nonhomologous end joining"/>
    <property type="evidence" value="ECO:0000250"/>
    <property type="project" value="UniProtKB"/>
</dbReference>
<dbReference type="GO" id="GO:2001034">
    <property type="term" value="P:positive regulation of double-strand break repair via nonhomologous end joining"/>
    <property type="evidence" value="ECO:0000266"/>
    <property type="project" value="RGD"/>
</dbReference>
<dbReference type="GO" id="GO:0051260">
    <property type="term" value="P:protein homooligomerization"/>
    <property type="evidence" value="ECO:0000266"/>
    <property type="project" value="RGD"/>
</dbReference>
<dbReference type="GO" id="GO:1990166">
    <property type="term" value="P:protein localization to site of double-strand break"/>
    <property type="evidence" value="ECO:0000266"/>
    <property type="project" value="RGD"/>
</dbReference>
<dbReference type="InterPro" id="IPR028278">
    <property type="entry name" value="MRI"/>
</dbReference>
<dbReference type="PANTHER" id="PTHR14566">
    <property type="entry name" value="CELL CYCLE REGULATOR OF NON-HOMOLOGOUS END JOINING"/>
    <property type="match status" value="1"/>
</dbReference>
<dbReference type="PANTHER" id="PTHR14566:SF0">
    <property type="entry name" value="CELL CYCLE REGULATOR OF NON-HOMOLOGOUS END JOINING"/>
    <property type="match status" value="1"/>
</dbReference>
<dbReference type="Pfam" id="PF15325">
    <property type="entry name" value="MRI"/>
    <property type="match status" value="1"/>
</dbReference>
<protein>
    <recommendedName>
        <fullName evidence="3">Cell cycle regulator of non-homologous end joining</fullName>
        <shortName evidence="3">Cell cycle regulator of NHEJ</shortName>
    </recommendedName>
    <alternativeName>
        <fullName evidence="1">Modulator of retrovirus infection homolog</fullName>
    </alternativeName>
</protein>
<gene>
    <name evidence="5" type="primary">Cyren</name>
    <name evidence="1" type="synonym">Mri</name>
</gene>
<feature type="chain" id="PRO_0000320950" description="Cell cycle regulator of non-homologous end joining">
    <location>
        <begin position="1"/>
        <end position="160"/>
    </location>
</feature>
<feature type="region of interest" description="Disordered" evidence="4">
    <location>
        <begin position="78"/>
        <end position="152"/>
    </location>
</feature>
<feature type="short sequence motif" description="KBM" evidence="3">
    <location>
        <begin position="1"/>
        <end position="21"/>
    </location>
</feature>
<feature type="short sequence motif" description="XLM" evidence="3">
    <location>
        <begin position="150"/>
        <end position="160"/>
    </location>
</feature>
<feature type="compositionally biased region" description="Low complexity" evidence="4">
    <location>
        <begin position="99"/>
        <end position="109"/>
    </location>
</feature>
<feature type="modified residue" description="N-acetylmethionine" evidence="3">
    <location>
        <position position="1"/>
    </location>
</feature>
<reference key="1">
    <citation type="journal article" date="2004" name="Genome Res.">
        <title>The status, quality, and expansion of the NIH full-length cDNA project: the Mammalian Gene Collection (MGC).</title>
        <authorList>
            <consortium name="The MGC Project Team"/>
        </authorList>
    </citation>
    <scope>NUCLEOTIDE SEQUENCE [LARGE SCALE MRNA]</scope>
    <source>
        <tissue>Testis</tissue>
    </source>
</reference>
<keyword id="KW-0007">Acetylation</keyword>
<keyword id="KW-0158">Chromosome</keyword>
<keyword id="KW-0963">Cytoplasm</keyword>
<keyword id="KW-0227">DNA damage</keyword>
<keyword id="KW-0234">DNA repair</keyword>
<keyword id="KW-0539">Nucleus</keyword>
<keyword id="KW-1185">Reference proteome</keyword>
<evidence type="ECO:0000250" key="1">
    <source>
        <dbReference type="UniProtKB" id="Q09HN1"/>
    </source>
</evidence>
<evidence type="ECO:0000250" key="2">
    <source>
        <dbReference type="UniProtKB" id="Q8BHZ5"/>
    </source>
</evidence>
<evidence type="ECO:0000250" key="3">
    <source>
        <dbReference type="UniProtKB" id="Q9BWK5"/>
    </source>
</evidence>
<evidence type="ECO:0000256" key="4">
    <source>
        <dbReference type="SAM" id="MobiDB-lite"/>
    </source>
</evidence>
<evidence type="ECO:0000312" key="5">
    <source>
        <dbReference type="RGD" id="1563238"/>
    </source>
</evidence>
<proteinExistence type="evidence at transcript level"/>
<comment type="function">
    <text evidence="1 2 3">Cell-cycle-specific regulator of classical non-homologous end joining (NHEJ) of DNA double-strand break (DSB) repair, which can act both as an activator or inhibitor of NHEJ, depending on the cell cycle phase (By similarity). Acts as a regulator of DNA repair pathway choice by specifically inhibiting classical NHEJ during the S and G2 phases, thereby promoting error-free repair by homologous recombination during cell cycle phases when sister chromatids are present. Preferentially protects single-stranded overhangs at break sites by inhibiting classical NHEJ, thereby creating a local environment that favors homologous recombination. Acts via interaction with XRCC5/Ku80 and XRCC6/Ku70 (By similarity). In contrast, acts as an activator of NHEJ during G1 phase of the cell cycle: promotes classical NHEJ in G1 phase cells via multivalent interactions that increase the affinity of DNA damage response proteins for DSB-associated chromatin. Also involved in immunoglobulin V(D)J recombination (By similarity). May also act as an indirect regulator of proteasome (By similarity).</text>
</comment>
<comment type="subunit">
    <text evidence="2 3">Interacts (via KBM motif) with XRCC5/Ku80 and XRCC6/Ku70 heterodimer. Interacts (via XLF motif) with TRIM28/KAP1, ATM, MRE11, NBN and RAD50. Interacts with splicing factor SF3B1 (By similarity). Interacts with ERCC6L2; this interaction is DNA independent (By similarity).</text>
</comment>
<comment type="subcellular location">
    <subcellularLocation>
        <location evidence="3">Cytoplasm</location>
    </subcellularLocation>
    <subcellularLocation>
        <location evidence="3">Nucleus</location>
    </subcellularLocation>
    <subcellularLocation>
        <location evidence="2">Chromosome</location>
    </subcellularLocation>
    <text evidence="2 3">Nuclear localization may depend upon interaction with XRCC5/Ku80 and XRCC6/Ku70 heterodimer (By similarity). Localizes to DNA damage sites (By similarity).</text>
</comment>
<comment type="domain">
    <text evidence="2">The KBM (Ku-binding motif) mediates interaction with XRCC5/Ku80 and XRCC6/Ku70 and recruitment to DNA damage sites.</text>
</comment>
<comment type="domain">
    <text evidence="2">The XLM (XLF-like motif) mediates interaction with DNA damage response proteins TRIM28/KAP1, ATM and members of the MRN complex (MRE11, NBN and RAD50).</text>
</comment>
<name>CYREN_RAT</name>
<accession>Q6AYH4</accession>
<organism>
    <name type="scientific">Rattus norvegicus</name>
    <name type="common">Rat</name>
    <dbReference type="NCBI Taxonomy" id="10116"/>
    <lineage>
        <taxon>Eukaryota</taxon>
        <taxon>Metazoa</taxon>
        <taxon>Chordata</taxon>
        <taxon>Craniata</taxon>
        <taxon>Vertebrata</taxon>
        <taxon>Euteleostomi</taxon>
        <taxon>Mammalia</taxon>
        <taxon>Eutheria</taxon>
        <taxon>Euarchontoglires</taxon>
        <taxon>Glires</taxon>
        <taxon>Rodentia</taxon>
        <taxon>Myomorpha</taxon>
        <taxon>Muroidea</taxon>
        <taxon>Muridae</taxon>
        <taxon>Murinae</taxon>
        <taxon>Rattus</taxon>
    </lineage>
</organism>